<sequence>MGQKVNPNGIRLGYIRDWRSTWYADSSRYATKLNEDIKVREFLHKKLAAAAVSKIQIERPAQNAKITIHTARPGIVIGKKGEDVEKLRAEVHKLMGIPVQINIEEVRKPEIDAKLVAESVAQQLEKRVMFRRAMKKAMQAAMKSGAKGIKIMVSGRLGGAEIARSEWARDGRVPLQTFRADVDYATAEALTTYGVIGVKVWIYKGEILPGQIAEKKNNKKGAK</sequence>
<evidence type="ECO:0000255" key="1">
    <source>
        <dbReference type="HAMAP-Rule" id="MF_01309"/>
    </source>
</evidence>
<evidence type="ECO:0000305" key="2"/>
<protein>
    <recommendedName>
        <fullName evidence="1">Small ribosomal subunit protein uS3</fullName>
    </recommendedName>
    <alternativeName>
        <fullName evidence="2">30S ribosomal protein S3</fullName>
    </alternativeName>
</protein>
<reference key="1">
    <citation type="journal article" date="2009" name="PLoS ONE">
        <title>Complete genome sequence of Francisella tularensis subspecies holarctica FTNF002-00.</title>
        <authorList>
            <person name="Barabote R.D."/>
            <person name="Xie G."/>
            <person name="Brettin T.S."/>
            <person name="Hinrichs S.H."/>
            <person name="Fey P.D."/>
            <person name="Jay J.J."/>
            <person name="Engle J.L."/>
            <person name="Godbole S.D."/>
            <person name="Noronha J.M."/>
            <person name="Scheuermann R.H."/>
            <person name="Zhou L.W."/>
            <person name="Lion C."/>
            <person name="Dempsey M.P."/>
        </authorList>
    </citation>
    <scope>NUCLEOTIDE SEQUENCE [LARGE SCALE GENOMIC DNA]</scope>
    <source>
        <strain>FTNF002-00 / FTA</strain>
    </source>
</reference>
<name>RS3_FRATF</name>
<organism>
    <name type="scientific">Francisella tularensis subsp. holarctica (strain FTNF002-00 / FTA)</name>
    <dbReference type="NCBI Taxonomy" id="458234"/>
    <lineage>
        <taxon>Bacteria</taxon>
        <taxon>Pseudomonadati</taxon>
        <taxon>Pseudomonadota</taxon>
        <taxon>Gammaproteobacteria</taxon>
        <taxon>Thiotrichales</taxon>
        <taxon>Francisellaceae</taxon>
        <taxon>Francisella</taxon>
    </lineage>
</organism>
<dbReference type="EMBL" id="CP000803">
    <property type="protein sequence ID" value="ABU60735.1"/>
    <property type="molecule type" value="Genomic_DNA"/>
</dbReference>
<dbReference type="RefSeq" id="WP_003017796.1">
    <property type="nucleotide sequence ID" value="NC_009749.1"/>
</dbReference>
<dbReference type="SMR" id="A7N9T2"/>
<dbReference type="KEGG" id="fta:FTA_0258"/>
<dbReference type="HOGENOM" id="CLU_058591_0_2_6"/>
<dbReference type="GO" id="GO:0022627">
    <property type="term" value="C:cytosolic small ribosomal subunit"/>
    <property type="evidence" value="ECO:0007669"/>
    <property type="project" value="TreeGrafter"/>
</dbReference>
<dbReference type="GO" id="GO:0003729">
    <property type="term" value="F:mRNA binding"/>
    <property type="evidence" value="ECO:0007669"/>
    <property type="project" value="UniProtKB-UniRule"/>
</dbReference>
<dbReference type="GO" id="GO:0019843">
    <property type="term" value="F:rRNA binding"/>
    <property type="evidence" value="ECO:0007669"/>
    <property type="project" value="UniProtKB-UniRule"/>
</dbReference>
<dbReference type="GO" id="GO:0003735">
    <property type="term" value="F:structural constituent of ribosome"/>
    <property type="evidence" value="ECO:0007669"/>
    <property type="project" value="InterPro"/>
</dbReference>
<dbReference type="GO" id="GO:0006412">
    <property type="term" value="P:translation"/>
    <property type="evidence" value="ECO:0007669"/>
    <property type="project" value="UniProtKB-UniRule"/>
</dbReference>
<dbReference type="CDD" id="cd02412">
    <property type="entry name" value="KH-II_30S_S3"/>
    <property type="match status" value="1"/>
</dbReference>
<dbReference type="FunFam" id="3.30.1140.32:FF:000001">
    <property type="entry name" value="30S ribosomal protein S3"/>
    <property type="match status" value="1"/>
</dbReference>
<dbReference type="FunFam" id="3.30.300.20:FF:000001">
    <property type="entry name" value="30S ribosomal protein S3"/>
    <property type="match status" value="1"/>
</dbReference>
<dbReference type="Gene3D" id="3.30.300.20">
    <property type="match status" value="1"/>
</dbReference>
<dbReference type="Gene3D" id="3.30.1140.32">
    <property type="entry name" value="Ribosomal protein S3, C-terminal domain"/>
    <property type="match status" value="1"/>
</dbReference>
<dbReference type="HAMAP" id="MF_01309_B">
    <property type="entry name" value="Ribosomal_uS3_B"/>
    <property type="match status" value="1"/>
</dbReference>
<dbReference type="InterPro" id="IPR004087">
    <property type="entry name" value="KH_dom"/>
</dbReference>
<dbReference type="InterPro" id="IPR015946">
    <property type="entry name" value="KH_dom-like_a/b"/>
</dbReference>
<dbReference type="InterPro" id="IPR004044">
    <property type="entry name" value="KH_dom_type_2"/>
</dbReference>
<dbReference type="InterPro" id="IPR009019">
    <property type="entry name" value="KH_sf_prok-type"/>
</dbReference>
<dbReference type="InterPro" id="IPR036419">
    <property type="entry name" value="Ribosomal_S3_C_sf"/>
</dbReference>
<dbReference type="InterPro" id="IPR005704">
    <property type="entry name" value="Ribosomal_uS3_bac-typ"/>
</dbReference>
<dbReference type="InterPro" id="IPR001351">
    <property type="entry name" value="Ribosomal_uS3_C"/>
</dbReference>
<dbReference type="InterPro" id="IPR018280">
    <property type="entry name" value="Ribosomal_uS3_CS"/>
</dbReference>
<dbReference type="NCBIfam" id="TIGR01009">
    <property type="entry name" value="rpsC_bact"/>
    <property type="match status" value="1"/>
</dbReference>
<dbReference type="PANTHER" id="PTHR11760">
    <property type="entry name" value="30S/40S RIBOSOMAL PROTEIN S3"/>
    <property type="match status" value="1"/>
</dbReference>
<dbReference type="PANTHER" id="PTHR11760:SF19">
    <property type="entry name" value="SMALL RIBOSOMAL SUBUNIT PROTEIN US3C"/>
    <property type="match status" value="1"/>
</dbReference>
<dbReference type="Pfam" id="PF07650">
    <property type="entry name" value="KH_2"/>
    <property type="match status" value="1"/>
</dbReference>
<dbReference type="Pfam" id="PF00189">
    <property type="entry name" value="Ribosomal_S3_C"/>
    <property type="match status" value="1"/>
</dbReference>
<dbReference type="SMART" id="SM00322">
    <property type="entry name" value="KH"/>
    <property type="match status" value="1"/>
</dbReference>
<dbReference type="SUPFAM" id="SSF54814">
    <property type="entry name" value="Prokaryotic type KH domain (KH-domain type II)"/>
    <property type="match status" value="1"/>
</dbReference>
<dbReference type="SUPFAM" id="SSF54821">
    <property type="entry name" value="Ribosomal protein S3 C-terminal domain"/>
    <property type="match status" value="1"/>
</dbReference>
<dbReference type="PROSITE" id="PS50823">
    <property type="entry name" value="KH_TYPE_2"/>
    <property type="match status" value="1"/>
</dbReference>
<dbReference type="PROSITE" id="PS00548">
    <property type="entry name" value="RIBOSOMAL_S3"/>
    <property type="match status" value="1"/>
</dbReference>
<proteinExistence type="inferred from homology"/>
<feature type="chain" id="PRO_1000086124" description="Small ribosomal subunit protein uS3">
    <location>
        <begin position="1"/>
        <end position="223"/>
    </location>
</feature>
<feature type="domain" description="KH type-2" evidence="1">
    <location>
        <begin position="39"/>
        <end position="107"/>
    </location>
</feature>
<gene>
    <name evidence="1" type="primary">rpsC</name>
    <name type="ordered locus">FTA_0258</name>
</gene>
<keyword id="KW-0687">Ribonucleoprotein</keyword>
<keyword id="KW-0689">Ribosomal protein</keyword>
<keyword id="KW-0694">RNA-binding</keyword>
<keyword id="KW-0699">rRNA-binding</keyword>
<comment type="function">
    <text evidence="1">Binds the lower part of the 30S subunit head. Binds mRNA in the 70S ribosome, positioning it for translation.</text>
</comment>
<comment type="subunit">
    <text evidence="1">Part of the 30S ribosomal subunit. Forms a tight complex with proteins S10 and S14.</text>
</comment>
<comment type="similarity">
    <text evidence="1">Belongs to the universal ribosomal protein uS3 family.</text>
</comment>
<accession>A7N9T2</accession>